<proteinExistence type="inferred from homology"/>
<reference key="1">
    <citation type="journal article" date="2005" name="Nucleic Acids Res.">
        <title>The genome sequence of Salmonella enterica serovar Choleraesuis, a highly invasive and resistant zoonotic pathogen.</title>
        <authorList>
            <person name="Chiu C.-H."/>
            <person name="Tang P."/>
            <person name="Chu C."/>
            <person name="Hu S."/>
            <person name="Bao Q."/>
            <person name="Yu J."/>
            <person name="Chou Y.-Y."/>
            <person name="Wang H.-S."/>
            <person name="Lee Y.-S."/>
        </authorList>
    </citation>
    <scope>NUCLEOTIDE SEQUENCE [LARGE SCALE GENOMIC DNA]</scope>
    <source>
        <strain>SC-B67</strain>
    </source>
</reference>
<keyword id="KW-0021">Allosteric enzyme</keyword>
<keyword id="KW-0119">Carbohydrate metabolism</keyword>
<keyword id="KW-0378">Hydrolase</keyword>
<gene>
    <name evidence="1" type="primary">nagB</name>
    <name type="ordered locus">SCH_0705</name>
</gene>
<name>NAGB_SALCH</name>
<evidence type="ECO:0000255" key="1">
    <source>
        <dbReference type="HAMAP-Rule" id="MF_01241"/>
    </source>
</evidence>
<organism>
    <name type="scientific">Salmonella choleraesuis (strain SC-B67)</name>
    <dbReference type="NCBI Taxonomy" id="321314"/>
    <lineage>
        <taxon>Bacteria</taxon>
        <taxon>Pseudomonadati</taxon>
        <taxon>Pseudomonadota</taxon>
        <taxon>Gammaproteobacteria</taxon>
        <taxon>Enterobacterales</taxon>
        <taxon>Enterobacteriaceae</taxon>
        <taxon>Salmonella</taxon>
    </lineage>
</organism>
<dbReference type="EC" id="3.5.99.6" evidence="1"/>
<dbReference type="EMBL" id="AE017220">
    <property type="protein sequence ID" value="AAX64611.1"/>
    <property type="molecule type" value="Genomic_DNA"/>
</dbReference>
<dbReference type="RefSeq" id="WP_001237059.1">
    <property type="nucleotide sequence ID" value="NC_006905.1"/>
</dbReference>
<dbReference type="SMR" id="Q57RQ0"/>
<dbReference type="KEGG" id="sec:SCH_0705"/>
<dbReference type="HOGENOM" id="CLU_049611_0_1_6"/>
<dbReference type="UniPathway" id="UPA00629">
    <property type="reaction ID" value="UER00684"/>
</dbReference>
<dbReference type="Proteomes" id="UP000000538">
    <property type="component" value="Chromosome"/>
</dbReference>
<dbReference type="GO" id="GO:0005737">
    <property type="term" value="C:cytoplasm"/>
    <property type="evidence" value="ECO:0007669"/>
    <property type="project" value="TreeGrafter"/>
</dbReference>
<dbReference type="GO" id="GO:0004342">
    <property type="term" value="F:glucosamine-6-phosphate deaminase activity"/>
    <property type="evidence" value="ECO:0007669"/>
    <property type="project" value="UniProtKB-UniRule"/>
</dbReference>
<dbReference type="GO" id="GO:0042802">
    <property type="term" value="F:identical protein binding"/>
    <property type="evidence" value="ECO:0007669"/>
    <property type="project" value="TreeGrafter"/>
</dbReference>
<dbReference type="GO" id="GO:0005975">
    <property type="term" value="P:carbohydrate metabolic process"/>
    <property type="evidence" value="ECO:0007669"/>
    <property type="project" value="InterPro"/>
</dbReference>
<dbReference type="GO" id="GO:0006043">
    <property type="term" value="P:glucosamine catabolic process"/>
    <property type="evidence" value="ECO:0007669"/>
    <property type="project" value="TreeGrafter"/>
</dbReference>
<dbReference type="GO" id="GO:0006046">
    <property type="term" value="P:N-acetylglucosamine catabolic process"/>
    <property type="evidence" value="ECO:0007669"/>
    <property type="project" value="TreeGrafter"/>
</dbReference>
<dbReference type="GO" id="GO:0019262">
    <property type="term" value="P:N-acetylneuraminate catabolic process"/>
    <property type="evidence" value="ECO:0007669"/>
    <property type="project" value="UniProtKB-UniRule"/>
</dbReference>
<dbReference type="CDD" id="cd01399">
    <property type="entry name" value="GlcN6P_deaminase"/>
    <property type="match status" value="1"/>
</dbReference>
<dbReference type="FunFam" id="3.40.50.1360:FF:000002">
    <property type="entry name" value="Glucosamine-6-phosphate deaminase"/>
    <property type="match status" value="1"/>
</dbReference>
<dbReference type="Gene3D" id="3.40.50.1360">
    <property type="match status" value="1"/>
</dbReference>
<dbReference type="HAMAP" id="MF_01241">
    <property type="entry name" value="GlcN6P_deamin"/>
    <property type="match status" value="1"/>
</dbReference>
<dbReference type="InterPro" id="IPR006148">
    <property type="entry name" value="Glc/Gal-6P_isomerase"/>
</dbReference>
<dbReference type="InterPro" id="IPR004547">
    <property type="entry name" value="Glucosamine6P_isomerase"/>
</dbReference>
<dbReference type="InterPro" id="IPR018321">
    <property type="entry name" value="Glucosamine6P_isomerase_CS"/>
</dbReference>
<dbReference type="InterPro" id="IPR037171">
    <property type="entry name" value="NagB/RpiA_transferase-like"/>
</dbReference>
<dbReference type="NCBIfam" id="TIGR00502">
    <property type="entry name" value="nagB"/>
    <property type="match status" value="1"/>
</dbReference>
<dbReference type="NCBIfam" id="NF001685">
    <property type="entry name" value="PRK00443.1-5"/>
    <property type="match status" value="1"/>
</dbReference>
<dbReference type="PANTHER" id="PTHR11280">
    <property type="entry name" value="GLUCOSAMINE-6-PHOSPHATE ISOMERASE"/>
    <property type="match status" value="1"/>
</dbReference>
<dbReference type="PANTHER" id="PTHR11280:SF5">
    <property type="entry name" value="GLUCOSAMINE-6-PHOSPHATE ISOMERASE"/>
    <property type="match status" value="1"/>
</dbReference>
<dbReference type="Pfam" id="PF01182">
    <property type="entry name" value="Glucosamine_iso"/>
    <property type="match status" value="1"/>
</dbReference>
<dbReference type="SUPFAM" id="SSF100950">
    <property type="entry name" value="NagB/RpiA/CoA transferase-like"/>
    <property type="match status" value="1"/>
</dbReference>
<dbReference type="PROSITE" id="PS01161">
    <property type="entry name" value="GLC_GALNAC_ISOMERASE"/>
    <property type="match status" value="1"/>
</dbReference>
<protein>
    <recommendedName>
        <fullName evidence="1">Glucosamine-6-phosphate deaminase</fullName>
        <ecNumber evidence="1">3.5.99.6</ecNumber>
    </recommendedName>
    <alternativeName>
        <fullName evidence="1">GlcN6P deaminase</fullName>
        <shortName evidence="1">GNPDA</shortName>
    </alternativeName>
    <alternativeName>
        <fullName evidence="1">Glucosamine-6-phosphate isomerase</fullName>
    </alternativeName>
</protein>
<accession>Q57RQ0</accession>
<sequence>MRLIPLSTAEQVGKWAARHIVNRINAFKPTADRPFVLGLPTGGTPLTAYKALVEMHKAGEVSFKHVVTFNMDEYVGLPKEHPESYHSFMHRNFFDHVDIPAENINLLNGNAPDIDAECRQYEEKIRSYGKIHLFMGGVGNDGHIAFNEPASSLASRTRIKTLTHDTRVANSRFFDGDVNQVPKYALTVGVGTLLDAEEVMILVLGHQKAQALQAAVEGNVNHMWTISCLQLHPKAVVVCDEPSTMELKVKTLKYFNELEAENIKGL</sequence>
<feature type="chain" id="PRO_1000067014" description="Glucosamine-6-phosphate deaminase">
    <location>
        <begin position="1"/>
        <end position="266"/>
    </location>
</feature>
<feature type="active site" description="Proton acceptor; for enolization step" evidence="1">
    <location>
        <position position="72"/>
    </location>
</feature>
<feature type="active site" description="For ring-opening step" evidence="1">
    <location>
        <position position="141"/>
    </location>
</feature>
<feature type="active site" description="Proton acceptor; for ring-opening step" evidence="1">
    <location>
        <position position="143"/>
    </location>
</feature>
<feature type="active site" description="For ring-opening step" evidence="1">
    <location>
        <position position="148"/>
    </location>
</feature>
<feature type="site" description="Part of the allosteric site" evidence="1">
    <location>
        <position position="151"/>
    </location>
</feature>
<feature type="site" description="Part of the allosteric site" evidence="1">
    <location>
        <position position="158"/>
    </location>
</feature>
<feature type="site" description="Part of the allosteric site" evidence="1">
    <location>
        <position position="160"/>
    </location>
</feature>
<feature type="site" description="Part of the allosteric site" evidence="1">
    <location>
        <position position="161"/>
    </location>
</feature>
<feature type="site" description="Part of the allosteric site" evidence="1">
    <location>
        <position position="254"/>
    </location>
</feature>
<comment type="function">
    <text evidence="1">Catalyzes the reversible isomerization-deamination of glucosamine 6-phosphate (GlcN6P) to form fructose 6-phosphate (Fru6P) and ammonium ion.</text>
</comment>
<comment type="catalytic activity">
    <reaction evidence="1">
        <text>alpha-D-glucosamine 6-phosphate + H2O = beta-D-fructose 6-phosphate + NH4(+)</text>
        <dbReference type="Rhea" id="RHEA:12172"/>
        <dbReference type="ChEBI" id="CHEBI:15377"/>
        <dbReference type="ChEBI" id="CHEBI:28938"/>
        <dbReference type="ChEBI" id="CHEBI:57634"/>
        <dbReference type="ChEBI" id="CHEBI:75989"/>
        <dbReference type="EC" id="3.5.99.6"/>
    </reaction>
</comment>
<comment type="activity regulation">
    <text evidence="1">Allosterically activated by N-acetylglucosamine 6-phosphate (GlcNAc6P).</text>
</comment>
<comment type="pathway">
    <text evidence="1">Amino-sugar metabolism; N-acetylneuraminate degradation; D-fructose 6-phosphate from N-acetylneuraminate: step 5/5.</text>
</comment>
<comment type="subunit">
    <text evidence="1">Homohexamer.</text>
</comment>
<comment type="similarity">
    <text evidence="1">Belongs to the glucosamine/galactosamine-6-phosphate isomerase family. NagB subfamily.</text>
</comment>